<comment type="subcellular location">
    <subcellularLocation>
        <location>Plastid</location>
        <location>Chloroplast</location>
    </subcellularLocation>
</comment>
<reference key="1">
    <citation type="journal article" date="1995" name="Plant Mol. Biol. Rep.">
        <title>The chloroplast genome of a chlorophyll a+c-containing alga, Odontella sinensis.</title>
        <authorList>
            <person name="Kowallik K.V."/>
            <person name="Stoebe B."/>
            <person name="Schaffran I."/>
            <person name="Kroth-Pancic P."/>
            <person name="Freier U."/>
        </authorList>
    </citation>
    <scope>NUCLEOTIDE SEQUENCE [LARGE SCALE GENOMIC DNA]</scope>
</reference>
<dbReference type="EMBL" id="Z67753">
    <property type="protein sequence ID" value="CAA91733.1"/>
    <property type="molecule type" value="Genomic_DNA"/>
</dbReference>
<dbReference type="PIR" id="S78360">
    <property type="entry name" value="S78360"/>
</dbReference>
<dbReference type="RefSeq" id="NP_043701.1">
    <property type="nucleotide sequence ID" value="NC_001713.1"/>
</dbReference>
<dbReference type="GeneID" id="1457274"/>
<dbReference type="GO" id="GO:0009507">
    <property type="term" value="C:chloroplast"/>
    <property type="evidence" value="ECO:0007669"/>
    <property type="project" value="UniProtKB-SubCell"/>
</dbReference>
<accession>P49838</accession>
<proteinExistence type="predicted"/>
<feature type="chain" id="PRO_0000217463" description="Uncharacterized 3.7 kDa protein in psbV-trnM intergenic region">
    <location>
        <begin position="1"/>
        <end position="29"/>
    </location>
</feature>
<organism>
    <name type="scientific">Trieres chinensis</name>
    <name type="common">Marine centric diatom</name>
    <name type="synonym">Odontella sinensis</name>
    <dbReference type="NCBI Taxonomy" id="1514140"/>
    <lineage>
        <taxon>Eukaryota</taxon>
        <taxon>Sar</taxon>
        <taxon>Stramenopiles</taxon>
        <taxon>Ochrophyta</taxon>
        <taxon>Bacillariophyta</taxon>
        <taxon>Mediophyceae</taxon>
        <taxon>Biddulphiophycidae</taxon>
        <taxon>Eupodiscales</taxon>
        <taxon>Parodontellaceae</taxon>
        <taxon>Trieres</taxon>
    </lineage>
</organism>
<name>YCXC_TRICV</name>
<geneLocation type="chloroplast"/>
<protein>
    <recommendedName>
        <fullName>Uncharacterized 3.7 kDa protein in psbV-trnM intergenic region</fullName>
    </recommendedName>
    <alternativeName>
        <fullName>ORF29B</fullName>
    </alternativeName>
</protein>
<keyword id="KW-0150">Chloroplast</keyword>
<keyword id="KW-0934">Plastid</keyword>
<sequence length="29" mass="3724">MLYPLSYMLLWTDSIVEQYKKFYLFRFDL</sequence>